<proteinExistence type="inferred from homology"/>
<feature type="chain" id="PRO_1000204768" description="Nucleoid-associated protein EUBELI_02017">
    <location>
        <begin position="1"/>
        <end position="116"/>
    </location>
</feature>
<feature type="region of interest" description="Disordered" evidence="2">
    <location>
        <begin position="1"/>
        <end position="42"/>
    </location>
</feature>
<feature type="compositionally biased region" description="Gly residues" evidence="2">
    <location>
        <begin position="1"/>
        <end position="12"/>
    </location>
</feature>
<feature type="compositionally biased region" description="Low complexity" evidence="2">
    <location>
        <begin position="13"/>
        <end position="26"/>
    </location>
</feature>
<gene>
    <name type="ordered locus">EUBELI_02017</name>
</gene>
<reference key="1">
    <citation type="journal article" date="2009" name="Proc. Natl. Acad. Sci. U.S.A.">
        <title>Characterizing a model human gut microbiota composed of members of its two dominant bacterial phyla.</title>
        <authorList>
            <person name="Mahowald M.A."/>
            <person name="Rey F.E."/>
            <person name="Seedorf H."/>
            <person name="Turnbaugh P.J."/>
            <person name="Fulton R.S."/>
            <person name="Wollam A."/>
            <person name="Shah N."/>
            <person name="Wang C."/>
            <person name="Magrini V."/>
            <person name="Wilson R.K."/>
            <person name="Cantarel B.L."/>
            <person name="Coutinho P.M."/>
            <person name="Henrissat B."/>
            <person name="Crock L.W."/>
            <person name="Russell A."/>
            <person name="Verberkmoes N.C."/>
            <person name="Hettich R.L."/>
            <person name="Gordon J.I."/>
        </authorList>
    </citation>
    <scope>NUCLEOTIDE SEQUENCE [LARGE SCALE GENOMIC DNA]</scope>
    <source>
        <strain>ATCC 27750 / DSM 3376 / VPI C15-48 / C15-B4</strain>
    </source>
</reference>
<protein>
    <recommendedName>
        <fullName evidence="1">Nucleoid-associated protein EUBELI_02017</fullName>
    </recommendedName>
</protein>
<name>Y2017_LACE2</name>
<dbReference type="EMBL" id="CP001104">
    <property type="protein sequence ID" value="ACR73000.1"/>
    <property type="molecule type" value="Genomic_DNA"/>
</dbReference>
<dbReference type="RefSeq" id="WP_012740232.1">
    <property type="nucleotide sequence ID" value="NC_012778.1"/>
</dbReference>
<dbReference type="SMR" id="C4Z4W1"/>
<dbReference type="STRING" id="515620.EUBELI_02017"/>
<dbReference type="GeneID" id="41356659"/>
<dbReference type="KEGG" id="eel:EUBELI_02017"/>
<dbReference type="eggNOG" id="COG0718">
    <property type="taxonomic scope" value="Bacteria"/>
</dbReference>
<dbReference type="HOGENOM" id="CLU_140930_1_0_9"/>
<dbReference type="Proteomes" id="UP000001476">
    <property type="component" value="Chromosome"/>
</dbReference>
<dbReference type="GO" id="GO:0043590">
    <property type="term" value="C:bacterial nucleoid"/>
    <property type="evidence" value="ECO:0007669"/>
    <property type="project" value="UniProtKB-UniRule"/>
</dbReference>
<dbReference type="GO" id="GO:0005829">
    <property type="term" value="C:cytosol"/>
    <property type="evidence" value="ECO:0007669"/>
    <property type="project" value="TreeGrafter"/>
</dbReference>
<dbReference type="GO" id="GO:0003677">
    <property type="term" value="F:DNA binding"/>
    <property type="evidence" value="ECO:0007669"/>
    <property type="project" value="UniProtKB-UniRule"/>
</dbReference>
<dbReference type="Gene3D" id="3.30.1310.10">
    <property type="entry name" value="Nucleoid-associated protein YbaB-like domain"/>
    <property type="match status" value="1"/>
</dbReference>
<dbReference type="HAMAP" id="MF_00274">
    <property type="entry name" value="DNA_YbaB_EbfC"/>
    <property type="match status" value="1"/>
</dbReference>
<dbReference type="InterPro" id="IPR036894">
    <property type="entry name" value="YbaB-like_sf"/>
</dbReference>
<dbReference type="InterPro" id="IPR004401">
    <property type="entry name" value="YbaB/EbfC"/>
</dbReference>
<dbReference type="NCBIfam" id="TIGR00103">
    <property type="entry name" value="DNA_YbaB_EbfC"/>
    <property type="match status" value="1"/>
</dbReference>
<dbReference type="PANTHER" id="PTHR33449">
    <property type="entry name" value="NUCLEOID-ASSOCIATED PROTEIN YBAB"/>
    <property type="match status" value="1"/>
</dbReference>
<dbReference type="PANTHER" id="PTHR33449:SF1">
    <property type="entry name" value="NUCLEOID-ASSOCIATED PROTEIN YBAB"/>
    <property type="match status" value="1"/>
</dbReference>
<dbReference type="Pfam" id="PF02575">
    <property type="entry name" value="YbaB_DNA_bd"/>
    <property type="match status" value="1"/>
</dbReference>
<dbReference type="PIRSF" id="PIRSF004555">
    <property type="entry name" value="UCP004555"/>
    <property type="match status" value="1"/>
</dbReference>
<dbReference type="SUPFAM" id="SSF82607">
    <property type="entry name" value="YbaB-like"/>
    <property type="match status" value="1"/>
</dbReference>
<evidence type="ECO:0000255" key="1">
    <source>
        <dbReference type="HAMAP-Rule" id="MF_00274"/>
    </source>
</evidence>
<evidence type="ECO:0000256" key="2">
    <source>
        <dbReference type="SAM" id="MobiDB-lite"/>
    </source>
</evidence>
<accession>C4Z4W1</accession>
<sequence>MAKRGGFPGGMPGNMNNLMKQAQRMQRQMEEQQAELENKEFSATAGGGVVEVTVTGKREVSKVKIDPEAVDPDDVEMLEDLIVAATNEALRKCEEESQAQMAKITGGLGGLGGGLF</sequence>
<organism>
    <name type="scientific">Lachnospira eligens (strain ATCC 27750 / DSM 3376 / VPI C15-48 / C15-B4)</name>
    <name type="common">Eubacterium eligens</name>
    <dbReference type="NCBI Taxonomy" id="515620"/>
    <lineage>
        <taxon>Bacteria</taxon>
        <taxon>Bacillati</taxon>
        <taxon>Bacillota</taxon>
        <taxon>Clostridia</taxon>
        <taxon>Lachnospirales</taxon>
        <taxon>Lachnospiraceae</taxon>
        <taxon>Lachnospira</taxon>
    </lineage>
</organism>
<comment type="function">
    <text evidence="1">Binds to DNA and alters its conformation. May be involved in regulation of gene expression, nucleoid organization and DNA protection.</text>
</comment>
<comment type="subunit">
    <text evidence="1">Homodimer.</text>
</comment>
<comment type="subcellular location">
    <subcellularLocation>
        <location evidence="1">Cytoplasm</location>
        <location evidence="1">Nucleoid</location>
    </subcellularLocation>
</comment>
<comment type="similarity">
    <text evidence="1">Belongs to the YbaB/EbfC family.</text>
</comment>
<keyword id="KW-0963">Cytoplasm</keyword>
<keyword id="KW-0238">DNA-binding</keyword>
<keyword id="KW-1185">Reference proteome</keyword>